<gene>
    <name type="primary">utp17</name>
    <name type="ORF">SPAC1B3.13</name>
</gene>
<dbReference type="EMBL" id="CU329670">
    <property type="protein sequence ID" value="CAB11248.2"/>
    <property type="molecule type" value="Genomic_DNA"/>
</dbReference>
<dbReference type="PIR" id="T38032">
    <property type="entry name" value="T38032"/>
</dbReference>
<dbReference type="RefSeq" id="NP_594798.2">
    <property type="nucleotide sequence ID" value="NM_001020226.2"/>
</dbReference>
<dbReference type="SMR" id="O13878"/>
<dbReference type="BioGRID" id="278691">
    <property type="interactions" value="5"/>
</dbReference>
<dbReference type="FunCoup" id="O13878">
    <property type="interactions" value="663"/>
</dbReference>
<dbReference type="STRING" id="284812.O13878"/>
<dbReference type="iPTMnet" id="O13878"/>
<dbReference type="PaxDb" id="4896-SPAC1B3.13.1"/>
<dbReference type="EnsemblFungi" id="SPAC1B3.13.1">
    <property type="protein sequence ID" value="SPAC1B3.13.1:pep"/>
    <property type="gene ID" value="SPAC1B3.13"/>
</dbReference>
<dbReference type="GeneID" id="2542217"/>
<dbReference type="KEGG" id="spo:2542217"/>
<dbReference type="PomBase" id="SPAC1B3.13"/>
<dbReference type="VEuPathDB" id="FungiDB:SPAC1B3.13"/>
<dbReference type="eggNOG" id="KOG1963">
    <property type="taxonomic scope" value="Eukaryota"/>
</dbReference>
<dbReference type="HOGENOM" id="CLU_403137_0_0_1"/>
<dbReference type="InParanoid" id="O13878"/>
<dbReference type="OMA" id="TRIDGPH"/>
<dbReference type="Reactome" id="R-SPO-6791226">
    <property type="pathway name" value="Major pathway of rRNA processing in the nucleolus and cytosol"/>
</dbReference>
<dbReference type="PRO" id="PR:O13878"/>
<dbReference type="Proteomes" id="UP000002485">
    <property type="component" value="Chromosome I"/>
</dbReference>
<dbReference type="GO" id="GO:0005730">
    <property type="term" value="C:nucleolus"/>
    <property type="evidence" value="ECO:0007005"/>
    <property type="project" value="PomBase"/>
</dbReference>
<dbReference type="GO" id="GO:0032040">
    <property type="term" value="C:small-subunit processome"/>
    <property type="evidence" value="ECO:0000314"/>
    <property type="project" value="PomBase"/>
</dbReference>
<dbReference type="GO" id="GO:0034455">
    <property type="term" value="C:t-UTP complex"/>
    <property type="evidence" value="ECO:0000266"/>
    <property type="project" value="PomBase"/>
</dbReference>
<dbReference type="GO" id="GO:0003723">
    <property type="term" value="F:RNA binding"/>
    <property type="evidence" value="ECO:0000318"/>
    <property type="project" value="GO_Central"/>
</dbReference>
<dbReference type="GO" id="GO:0030515">
    <property type="term" value="F:snoRNA binding"/>
    <property type="evidence" value="ECO:0000266"/>
    <property type="project" value="PomBase"/>
</dbReference>
<dbReference type="GO" id="GO:0030490">
    <property type="term" value="P:maturation of SSU-rRNA"/>
    <property type="evidence" value="ECO:0000266"/>
    <property type="project" value="PomBase"/>
</dbReference>
<dbReference type="GO" id="GO:2000234">
    <property type="term" value="P:positive regulation of rRNA processing"/>
    <property type="evidence" value="ECO:0000318"/>
    <property type="project" value="GO_Central"/>
</dbReference>
<dbReference type="GO" id="GO:0045943">
    <property type="term" value="P:positive regulation of transcription by RNA polymerase I"/>
    <property type="evidence" value="ECO:0000318"/>
    <property type="project" value="GO_Central"/>
</dbReference>
<dbReference type="Gene3D" id="2.130.10.10">
    <property type="entry name" value="YVTN repeat-like/Quinoprotein amine dehydrogenase"/>
    <property type="match status" value="2"/>
</dbReference>
<dbReference type="InterPro" id="IPR011047">
    <property type="entry name" value="Quinoprotein_ADH-like_sf"/>
</dbReference>
<dbReference type="InterPro" id="IPR015943">
    <property type="entry name" value="WD40/YVTN_repeat-like_dom_sf"/>
</dbReference>
<dbReference type="InterPro" id="IPR036322">
    <property type="entry name" value="WD40_repeat_dom_sf"/>
</dbReference>
<dbReference type="InterPro" id="IPR001680">
    <property type="entry name" value="WD40_rpt"/>
</dbReference>
<dbReference type="InterPro" id="IPR053826">
    <property type="entry name" value="WDR75"/>
</dbReference>
<dbReference type="PANTHER" id="PTHR44215">
    <property type="entry name" value="WD REPEAT-CONTAINING PROTEIN 75"/>
    <property type="match status" value="1"/>
</dbReference>
<dbReference type="PANTHER" id="PTHR44215:SF1">
    <property type="entry name" value="WD REPEAT-CONTAINING PROTEIN 75"/>
    <property type="match status" value="1"/>
</dbReference>
<dbReference type="Pfam" id="PF23869">
    <property type="entry name" value="Beta-prop_WDR75_1st"/>
    <property type="match status" value="1"/>
</dbReference>
<dbReference type="Pfam" id="PF23769">
    <property type="entry name" value="Beta-prop_WDR75_2nd"/>
    <property type="match status" value="1"/>
</dbReference>
<dbReference type="SMART" id="SM00320">
    <property type="entry name" value="WD40"/>
    <property type="match status" value="2"/>
</dbReference>
<dbReference type="SUPFAM" id="SSF50998">
    <property type="entry name" value="Quinoprotein alcohol dehydrogenase-like"/>
    <property type="match status" value="1"/>
</dbReference>
<dbReference type="SUPFAM" id="SSF50978">
    <property type="entry name" value="WD40 repeat-like"/>
    <property type="match status" value="1"/>
</dbReference>
<dbReference type="PROSITE" id="PS50082">
    <property type="entry name" value="WD_REPEATS_2"/>
    <property type="match status" value="1"/>
</dbReference>
<dbReference type="PROSITE" id="PS50294">
    <property type="entry name" value="WD_REPEATS_REGION"/>
    <property type="match status" value="1"/>
</dbReference>
<sequence>MEGPNSMEVGSLEVKKNDKDPWSKTAYLGGRLVSKIPAVYSNDNKFVFLTYDTFIGIFSLITGDCINRIFFPNNLANLLPVAVLLSPENAFELYVIFQSGYVCVHDWSNSELLRTMEISTRVHAASFSGKLLFAVTDTPASDSASSQDRFTLYALSPSTSKEGSSILIPTFVSKFNEFLALDSSLRDNNLATVAVITTDKAIFSLNVPKKKRSQRWIHREHLFNMPQKLTNVSLCGSACAVSDDEGKIHVINDISNEKFNPQILHWHANPLNGLSWALNGEYLLSGGQEGVLVLWQMETSHRQFLPRLGSSILSIATSHDSDSYALHLGDNSLVVIRAVDLAEQIHVSGINSFESKYLTSTGPKNTSKQLQGLVQFSSVSPNGELLLMSSSSFNGHSVSVQEYDLTKDSTIRKFEAARYSYSSVSKNSDDATSLDNGHVGSVAVTSSRNGLYIATIDTWCTNIIDEQQRNVKQTALKFWQFDSVQKTWVLMTRIDNPHGNLEVVTALKMMTSSNRFITVGTDATLRIWALLPGSSAWKCVAIHHFANTHSQASIKQRYGFSKALTCSLDDSIIGFGYGSCMHFINSETLEEISTVDLPHGGQLENAQFLNAEHCVIISQRRLLVWNVISASVQWTLASKFTGLLASSSSGNDFAVIDFNSSYSRLIIFSPDSPKIQSIHIFKTLPVALHYLHGGFVVLDNKSIIHVYAGDLTTKIPSAQLSIDNTSRSLLGDFQKRNVPLLNLENPISGSQGLHYKRLTTDMIHNLFNVPSNSPVNMQAIYNTFSKMAVGEPMESLGTQIATLNTE</sequence>
<name>UTP17_SCHPO</name>
<protein>
    <recommendedName>
        <fullName>U3 small nucleolar RNA-associated protein 17</fullName>
        <shortName>U3 snoRNA-associated protein 17</shortName>
    </recommendedName>
    <alternativeName>
        <fullName>U3 protein 17 required for transcription</fullName>
    </alternativeName>
</protein>
<accession>O13878</accession>
<proteinExistence type="inferred from homology"/>
<comment type="function">
    <text evidence="1">Involved in nucleolar processing of pre-18S ribosomal RNA. Required for optimal pre-ribosomal RNA transcription by RNA polymerase I together with a subset of U3 proteins required for transcription (t-UTPs) (By similarity).</text>
</comment>
<comment type="subunit">
    <text evidence="2">Component of the ribosomal small subunit (SSU) processome.</text>
</comment>
<comment type="subcellular location">
    <subcellularLocation>
        <location evidence="3">Nucleus</location>
        <location evidence="3">Nucleolus</location>
    </subcellularLocation>
</comment>
<feature type="chain" id="PRO_0000307923" description="U3 small nucleolar RNA-associated protein 17">
    <location>
        <begin position="1"/>
        <end position="806"/>
    </location>
</feature>
<feature type="repeat" description="WD 1">
    <location>
        <begin position="266"/>
        <end position="305"/>
    </location>
</feature>
<feature type="repeat" description="WD 2">
    <location>
        <begin position="448"/>
        <end position="489"/>
    </location>
</feature>
<feature type="repeat" description="WD 3">
    <location>
        <begin position="499"/>
        <end position="538"/>
    </location>
</feature>
<feature type="repeat" description="WD 4">
    <location>
        <begin position="598"/>
        <end position="635"/>
    </location>
</feature>
<evidence type="ECO:0000250" key="1"/>
<evidence type="ECO:0000250" key="2">
    <source>
        <dbReference type="UniProtKB" id="Q02931"/>
    </source>
</evidence>
<evidence type="ECO:0000269" key="3">
    <source>
    </source>
</evidence>
<evidence type="ECO:0000305" key="4"/>
<organism>
    <name type="scientific">Schizosaccharomyces pombe (strain 972 / ATCC 24843)</name>
    <name type="common">Fission yeast</name>
    <dbReference type="NCBI Taxonomy" id="284812"/>
    <lineage>
        <taxon>Eukaryota</taxon>
        <taxon>Fungi</taxon>
        <taxon>Dikarya</taxon>
        <taxon>Ascomycota</taxon>
        <taxon>Taphrinomycotina</taxon>
        <taxon>Schizosaccharomycetes</taxon>
        <taxon>Schizosaccharomycetales</taxon>
        <taxon>Schizosaccharomycetaceae</taxon>
        <taxon>Schizosaccharomyces</taxon>
    </lineage>
</organism>
<reference key="1">
    <citation type="journal article" date="2002" name="Nature">
        <title>The genome sequence of Schizosaccharomyces pombe.</title>
        <authorList>
            <person name="Wood V."/>
            <person name="Gwilliam R."/>
            <person name="Rajandream M.A."/>
            <person name="Lyne M.H."/>
            <person name="Lyne R."/>
            <person name="Stewart A."/>
            <person name="Sgouros J.G."/>
            <person name="Peat N."/>
            <person name="Hayles J."/>
            <person name="Baker S.G."/>
            <person name="Basham D."/>
            <person name="Bowman S."/>
            <person name="Brooks K."/>
            <person name="Brown D."/>
            <person name="Brown S."/>
            <person name="Chillingworth T."/>
            <person name="Churcher C.M."/>
            <person name="Collins M."/>
            <person name="Connor R."/>
            <person name="Cronin A."/>
            <person name="Davis P."/>
            <person name="Feltwell T."/>
            <person name="Fraser A."/>
            <person name="Gentles S."/>
            <person name="Goble A."/>
            <person name="Hamlin N."/>
            <person name="Harris D.E."/>
            <person name="Hidalgo J."/>
            <person name="Hodgson G."/>
            <person name="Holroyd S."/>
            <person name="Hornsby T."/>
            <person name="Howarth S."/>
            <person name="Huckle E.J."/>
            <person name="Hunt S."/>
            <person name="Jagels K."/>
            <person name="James K.D."/>
            <person name="Jones L."/>
            <person name="Jones M."/>
            <person name="Leather S."/>
            <person name="McDonald S."/>
            <person name="McLean J."/>
            <person name="Mooney P."/>
            <person name="Moule S."/>
            <person name="Mungall K.L."/>
            <person name="Murphy L.D."/>
            <person name="Niblett D."/>
            <person name="Odell C."/>
            <person name="Oliver K."/>
            <person name="O'Neil S."/>
            <person name="Pearson D."/>
            <person name="Quail M.A."/>
            <person name="Rabbinowitsch E."/>
            <person name="Rutherford K.M."/>
            <person name="Rutter S."/>
            <person name="Saunders D."/>
            <person name="Seeger K."/>
            <person name="Sharp S."/>
            <person name="Skelton J."/>
            <person name="Simmonds M.N."/>
            <person name="Squares R."/>
            <person name="Squares S."/>
            <person name="Stevens K."/>
            <person name="Taylor K."/>
            <person name="Taylor R.G."/>
            <person name="Tivey A."/>
            <person name="Walsh S.V."/>
            <person name="Warren T."/>
            <person name="Whitehead S."/>
            <person name="Woodward J.R."/>
            <person name="Volckaert G."/>
            <person name="Aert R."/>
            <person name="Robben J."/>
            <person name="Grymonprez B."/>
            <person name="Weltjens I."/>
            <person name="Vanstreels E."/>
            <person name="Rieger M."/>
            <person name="Schaefer M."/>
            <person name="Mueller-Auer S."/>
            <person name="Gabel C."/>
            <person name="Fuchs M."/>
            <person name="Duesterhoeft A."/>
            <person name="Fritzc C."/>
            <person name="Holzer E."/>
            <person name="Moestl D."/>
            <person name="Hilbert H."/>
            <person name="Borzym K."/>
            <person name="Langer I."/>
            <person name="Beck A."/>
            <person name="Lehrach H."/>
            <person name="Reinhardt R."/>
            <person name="Pohl T.M."/>
            <person name="Eger P."/>
            <person name="Zimmermann W."/>
            <person name="Wedler H."/>
            <person name="Wambutt R."/>
            <person name="Purnelle B."/>
            <person name="Goffeau A."/>
            <person name="Cadieu E."/>
            <person name="Dreano S."/>
            <person name="Gloux S."/>
            <person name="Lelaure V."/>
            <person name="Mottier S."/>
            <person name="Galibert F."/>
            <person name="Aves S.J."/>
            <person name="Xiang Z."/>
            <person name="Hunt C."/>
            <person name="Moore K."/>
            <person name="Hurst S.M."/>
            <person name="Lucas M."/>
            <person name="Rochet M."/>
            <person name="Gaillardin C."/>
            <person name="Tallada V.A."/>
            <person name="Garzon A."/>
            <person name="Thode G."/>
            <person name="Daga R.R."/>
            <person name="Cruzado L."/>
            <person name="Jimenez J."/>
            <person name="Sanchez M."/>
            <person name="del Rey F."/>
            <person name="Benito J."/>
            <person name="Dominguez A."/>
            <person name="Revuelta J.L."/>
            <person name="Moreno S."/>
            <person name="Armstrong J."/>
            <person name="Forsburg S.L."/>
            <person name="Cerutti L."/>
            <person name="Lowe T."/>
            <person name="McCombie W.R."/>
            <person name="Paulsen I."/>
            <person name="Potashkin J."/>
            <person name="Shpakovski G.V."/>
            <person name="Ussery D."/>
            <person name="Barrell B.G."/>
            <person name="Nurse P."/>
        </authorList>
    </citation>
    <scope>NUCLEOTIDE SEQUENCE [LARGE SCALE GENOMIC DNA]</scope>
    <source>
        <strain>972 / ATCC 24843</strain>
    </source>
</reference>
<reference key="2">
    <citation type="journal article" date="2011" name="Science">
        <title>Comparative functional genomics of the fission yeasts.</title>
        <authorList>
            <person name="Rhind N."/>
            <person name="Chen Z."/>
            <person name="Yassour M."/>
            <person name="Thompson D.A."/>
            <person name="Haas B.J."/>
            <person name="Habib N."/>
            <person name="Wapinski I."/>
            <person name="Roy S."/>
            <person name="Lin M.F."/>
            <person name="Heiman D.I."/>
            <person name="Young S.K."/>
            <person name="Furuya K."/>
            <person name="Guo Y."/>
            <person name="Pidoux A."/>
            <person name="Chen H.M."/>
            <person name="Robbertse B."/>
            <person name="Goldberg J.M."/>
            <person name="Aoki K."/>
            <person name="Bayne E.H."/>
            <person name="Berlin A.M."/>
            <person name="Desjardins C.A."/>
            <person name="Dobbs E."/>
            <person name="Dukaj L."/>
            <person name="Fan L."/>
            <person name="FitzGerald M.G."/>
            <person name="French C."/>
            <person name="Gujja S."/>
            <person name="Hansen K."/>
            <person name="Keifenheim D."/>
            <person name="Levin J.Z."/>
            <person name="Mosher R.A."/>
            <person name="Mueller C.A."/>
            <person name="Pfiffner J."/>
            <person name="Priest M."/>
            <person name="Russ C."/>
            <person name="Smialowska A."/>
            <person name="Swoboda P."/>
            <person name="Sykes S.M."/>
            <person name="Vaughn M."/>
            <person name="Vengrova S."/>
            <person name="Yoder R."/>
            <person name="Zeng Q."/>
            <person name="Allshire R."/>
            <person name="Baulcombe D."/>
            <person name="Birren B.W."/>
            <person name="Brown W."/>
            <person name="Ekwall K."/>
            <person name="Kellis M."/>
            <person name="Leatherwood J."/>
            <person name="Levin H."/>
            <person name="Margalit H."/>
            <person name="Martienssen R."/>
            <person name="Nieduszynski C.A."/>
            <person name="Spatafora J.W."/>
            <person name="Friedman N."/>
            <person name="Dalgaard J.Z."/>
            <person name="Baumann P."/>
            <person name="Niki H."/>
            <person name="Regev A."/>
            <person name="Nusbaum C."/>
        </authorList>
    </citation>
    <scope>REVISION OF GENE MODEL</scope>
</reference>
<reference evidence="4" key="3">
    <citation type="journal article" date="2006" name="Nat. Biotechnol.">
        <title>ORFeome cloning and global analysis of protein localization in the fission yeast Schizosaccharomyces pombe.</title>
        <authorList>
            <person name="Matsuyama A."/>
            <person name="Arai R."/>
            <person name="Yashiroda Y."/>
            <person name="Shirai A."/>
            <person name="Kamata A."/>
            <person name="Sekido S."/>
            <person name="Kobayashi Y."/>
            <person name="Hashimoto A."/>
            <person name="Hamamoto M."/>
            <person name="Hiraoka Y."/>
            <person name="Horinouchi S."/>
            <person name="Yoshida M."/>
        </authorList>
    </citation>
    <scope>SUBCELLULAR LOCATION [LARGE SCALE ANALYSIS]</scope>
</reference>
<keyword id="KW-0539">Nucleus</keyword>
<keyword id="KW-1185">Reference proteome</keyword>
<keyword id="KW-0677">Repeat</keyword>
<keyword id="KW-0687">Ribonucleoprotein</keyword>
<keyword id="KW-0690">Ribosome biogenesis</keyword>
<keyword id="KW-0698">rRNA processing</keyword>
<keyword id="KW-0804">Transcription</keyword>
<keyword id="KW-0853">WD repeat</keyword>